<organism>
    <name type="scientific">Deinococcus deserti (strain DSM 17065 / CIP 109153 / LMG 22923 / VCD115)</name>
    <dbReference type="NCBI Taxonomy" id="546414"/>
    <lineage>
        <taxon>Bacteria</taxon>
        <taxon>Thermotogati</taxon>
        <taxon>Deinococcota</taxon>
        <taxon>Deinococci</taxon>
        <taxon>Deinococcales</taxon>
        <taxon>Deinococcaceae</taxon>
        <taxon>Deinococcus</taxon>
    </lineage>
</organism>
<reference key="1">
    <citation type="journal article" date="2009" name="PLoS Genet.">
        <title>Alliance of proteomics and genomics to unravel the specificities of Sahara bacterium Deinococcus deserti.</title>
        <authorList>
            <person name="de Groot A."/>
            <person name="Dulermo R."/>
            <person name="Ortet P."/>
            <person name="Blanchard L."/>
            <person name="Guerin P."/>
            <person name="Fernandez B."/>
            <person name="Vacherie B."/>
            <person name="Dossat C."/>
            <person name="Jolivet E."/>
            <person name="Siguier P."/>
            <person name="Chandler M."/>
            <person name="Barakat M."/>
            <person name="Dedieu A."/>
            <person name="Barbe V."/>
            <person name="Heulin T."/>
            <person name="Sommer S."/>
            <person name="Achouak W."/>
            <person name="Armengaud J."/>
        </authorList>
    </citation>
    <scope>NUCLEOTIDE SEQUENCE [LARGE SCALE GENOMIC DNA]</scope>
    <source>
        <strain>DSM 17065 / CIP 109153 / LMG 22923 / VCD115</strain>
    </source>
</reference>
<accession>C1CYL1</accession>
<dbReference type="EC" id="2.5.1.78" evidence="1"/>
<dbReference type="EMBL" id="CP001114">
    <property type="protein sequence ID" value="ACO45032.1"/>
    <property type="molecule type" value="Genomic_DNA"/>
</dbReference>
<dbReference type="RefSeq" id="WP_012692155.1">
    <property type="nucleotide sequence ID" value="NC_012526.1"/>
</dbReference>
<dbReference type="SMR" id="C1CYL1"/>
<dbReference type="STRING" id="546414.Deide_02240"/>
<dbReference type="PaxDb" id="546414-Deide_02240"/>
<dbReference type="KEGG" id="ddr:Deide_02240"/>
<dbReference type="eggNOG" id="COG0054">
    <property type="taxonomic scope" value="Bacteria"/>
</dbReference>
<dbReference type="HOGENOM" id="CLU_089358_1_1_0"/>
<dbReference type="OrthoDB" id="9809709at2"/>
<dbReference type="UniPathway" id="UPA00275">
    <property type="reaction ID" value="UER00404"/>
</dbReference>
<dbReference type="Proteomes" id="UP000002208">
    <property type="component" value="Chromosome"/>
</dbReference>
<dbReference type="GO" id="GO:0005829">
    <property type="term" value="C:cytosol"/>
    <property type="evidence" value="ECO:0007669"/>
    <property type="project" value="TreeGrafter"/>
</dbReference>
<dbReference type="GO" id="GO:0009349">
    <property type="term" value="C:riboflavin synthase complex"/>
    <property type="evidence" value="ECO:0007669"/>
    <property type="project" value="InterPro"/>
</dbReference>
<dbReference type="GO" id="GO:0000906">
    <property type="term" value="F:6,7-dimethyl-8-ribityllumazine synthase activity"/>
    <property type="evidence" value="ECO:0007669"/>
    <property type="project" value="UniProtKB-UniRule"/>
</dbReference>
<dbReference type="GO" id="GO:0009231">
    <property type="term" value="P:riboflavin biosynthetic process"/>
    <property type="evidence" value="ECO:0007669"/>
    <property type="project" value="UniProtKB-UniRule"/>
</dbReference>
<dbReference type="CDD" id="cd09209">
    <property type="entry name" value="Lumazine_synthase-I"/>
    <property type="match status" value="1"/>
</dbReference>
<dbReference type="FunFam" id="3.40.50.960:FF:000001">
    <property type="entry name" value="6,7-dimethyl-8-ribityllumazine synthase"/>
    <property type="match status" value="1"/>
</dbReference>
<dbReference type="Gene3D" id="3.40.50.960">
    <property type="entry name" value="Lumazine/riboflavin synthase"/>
    <property type="match status" value="1"/>
</dbReference>
<dbReference type="HAMAP" id="MF_00178">
    <property type="entry name" value="Lumazine_synth"/>
    <property type="match status" value="1"/>
</dbReference>
<dbReference type="InterPro" id="IPR034964">
    <property type="entry name" value="LS"/>
</dbReference>
<dbReference type="InterPro" id="IPR002180">
    <property type="entry name" value="LS/RS"/>
</dbReference>
<dbReference type="InterPro" id="IPR036467">
    <property type="entry name" value="LS/RS_sf"/>
</dbReference>
<dbReference type="NCBIfam" id="TIGR00114">
    <property type="entry name" value="lumazine-synth"/>
    <property type="match status" value="1"/>
</dbReference>
<dbReference type="PANTHER" id="PTHR21058:SF0">
    <property type="entry name" value="6,7-DIMETHYL-8-RIBITYLLUMAZINE SYNTHASE"/>
    <property type="match status" value="1"/>
</dbReference>
<dbReference type="PANTHER" id="PTHR21058">
    <property type="entry name" value="6,7-DIMETHYL-8-RIBITYLLUMAZINE SYNTHASE DMRL SYNTHASE LUMAZINE SYNTHASE"/>
    <property type="match status" value="1"/>
</dbReference>
<dbReference type="Pfam" id="PF00885">
    <property type="entry name" value="DMRL_synthase"/>
    <property type="match status" value="1"/>
</dbReference>
<dbReference type="SUPFAM" id="SSF52121">
    <property type="entry name" value="Lumazine synthase"/>
    <property type="match status" value="1"/>
</dbReference>
<sequence length="156" mass="16703">MNRIEAHLLATDLKFAIISTRWNHLIVDRLVEGAELAFVQHGGRSENLDHYLSPGAYEVPLIARKLAESGRYDAIVCLGAVIKGDTDHYDFVAGGAANGILNTSLHTGVPVAFGVLTTDTVEQALNRAGIKAGNKGAEATLAMIETVNLLRQIPQS</sequence>
<gene>
    <name evidence="1" type="primary">ribH</name>
    <name type="ordered locus">Deide_02240</name>
</gene>
<proteinExistence type="inferred from homology"/>
<name>RISB_DEIDV</name>
<feature type="chain" id="PRO_1000203785" description="6,7-dimethyl-8-ribityllumazine synthase">
    <location>
        <begin position="1"/>
        <end position="156"/>
    </location>
</feature>
<feature type="active site" description="Proton donor" evidence="1">
    <location>
        <position position="88"/>
    </location>
</feature>
<feature type="binding site" evidence="1">
    <location>
        <position position="22"/>
    </location>
    <ligand>
        <name>5-amino-6-(D-ribitylamino)uracil</name>
        <dbReference type="ChEBI" id="CHEBI:15934"/>
    </ligand>
</feature>
<feature type="binding site" evidence="1">
    <location>
        <begin position="56"/>
        <end position="58"/>
    </location>
    <ligand>
        <name>5-amino-6-(D-ribitylamino)uracil</name>
        <dbReference type="ChEBI" id="CHEBI:15934"/>
    </ligand>
</feature>
<feature type="binding site" evidence="1">
    <location>
        <begin position="80"/>
        <end position="82"/>
    </location>
    <ligand>
        <name>5-amino-6-(D-ribitylamino)uracil</name>
        <dbReference type="ChEBI" id="CHEBI:15934"/>
    </ligand>
</feature>
<feature type="binding site" evidence="1">
    <location>
        <begin position="85"/>
        <end position="86"/>
    </location>
    <ligand>
        <name>(2S)-2-hydroxy-3-oxobutyl phosphate</name>
        <dbReference type="ChEBI" id="CHEBI:58830"/>
    </ligand>
</feature>
<feature type="binding site" evidence="1">
    <location>
        <position position="113"/>
    </location>
    <ligand>
        <name>5-amino-6-(D-ribitylamino)uracil</name>
        <dbReference type="ChEBI" id="CHEBI:15934"/>
    </ligand>
</feature>
<feature type="binding site" evidence="1">
    <location>
        <position position="127"/>
    </location>
    <ligand>
        <name>(2S)-2-hydroxy-3-oxobutyl phosphate</name>
        <dbReference type="ChEBI" id="CHEBI:58830"/>
    </ligand>
</feature>
<protein>
    <recommendedName>
        <fullName evidence="1">6,7-dimethyl-8-ribityllumazine synthase</fullName>
        <shortName evidence="1">DMRL synthase</shortName>
        <shortName evidence="1">LS</shortName>
        <shortName evidence="1">Lumazine synthase</shortName>
        <ecNumber evidence="1">2.5.1.78</ecNumber>
    </recommendedName>
</protein>
<keyword id="KW-1185">Reference proteome</keyword>
<keyword id="KW-0686">Riboflavin biosynthesis</keyword>
<keyword id="KW-0808">Transferase</keyword>
<comment type="function">
    <text evidence="1">Catalyzes the formation of 6,7-dimethyl-8-ribityllumazine by condensation of 5-amino-6-(D-ribitylamino)uracil with 3,4-dihydroxy-2-butanone 4-phosphate. This is the penultimate step in the biosynthesis of riboflavin.</text>
</comment>
<comment type="catalytic activity">
    <reaction evidence="1">
        <text>(2S)-2-hydroxy-3-oxobutyl phosphate + 5-amino-6-(D-ribitylamino)uracil = 6,7-dimethyl-8-(1-D-ribityl)lumazine + phosphate + 2 H2O + H(+)</text>
        <dbReference type="Rhea" id="RHEA:26152"/>
        <dbReference type="ChEBI" id="CHEBI:15377"/>
        <dbReference type="ChEBI" id="CHEBI:15378"/>
        <dbReference type="ChEBI" id="CHEBI:15934"/>
        <dbReference type="ChEBI" id="CHEBI:43474"/>
        <dbReference type="ChEBI" id="CHEBI:58201"/>
        <dbReference type="ChEBI" id="CHEBI:58830"/>
        <dbReference type="EC" id="2.5.1.78"/>
    </reaction>
</comment>
<comment type="pathway">
    <text evidence="1">Cofactor biosynthesis; riboflavin biosynthesis; riboflavin from 2-hydroxy-3-oxobutyl phosphate and 5-amino-6-(D-ribitylamino)uracil: step 1/2.</text>
</comment>
<comment type="similarity">
    <text evidence="1">Belongs to the DMRL synthase family.</text>
</comment>
<evidence type="ECO:0000255" key="1">
    <source>
        <dbReference type="HAMAP-Rule" id="MF_00178"/>
    </source>
</evidence>